<dbReference type="EC" id="1.17.7.3" evidence="1"/>
<dbReference type="EMBL" id="CP000679">
    <property type="protein sequence ID" value="ABP67929.1"/>
    <property type="molecule type" value="Genomic_DNA"/>
</dbReference>
<dbReference type="SMR" id="A4XLZ4"/>
<dbReference type="STRING" id="351627.Csac_2351"/>
<dbReference type="KEGG" id="csc:Csac_2351"/>
<dbReference type="eggNOG" id="COG0821">
    <property type="taxonomic scope" value="Bacteria"/>
</dbReference>
<dbReference type="HOGENOM" id="CLU_042258_0_0_9"/>
<dbReference type="UniPathway" id="UPA00056">
    <property type="reaction ID" value="UER00096"/>
</dbReference>
<dbReference type="Proteomes" id="UP000000256">
    <property type="component" value="Chromosome"/>
</dbReference>
<dbReference type="GO" id="GO:0051539">
    <property type="term" value="F:4 iron, 4 sulfur cluster binding"/>
    <property type="evidence" value="ECO:0007669"/>
    <property type="project" value="UniProtKB-UniRule"/>
</dbReference>
<dbReference type="GO" id="GO:0046429">
    <property type="term" value="F:4-hydroxy-3-methylbut-2-en-1-yl diphosphate synthase activity (ferredoxin)"/>
    <property type="evidence" value="ECO:0007669"/>
    <property type="project" value="UniProtKB-UniRule"/>
</dbReference>
<dbReference type="GO" id="GO:0141197">
    <property type="term" value="F:4-hydroxy-3-methylbut-2-enyl-diphosphate synthase activity (flavodoxin)"/>
    <property type="evidence" value="ECO:0007669"/>
    <property type="project" value="UniProtKB-EC"/>
</dbReference>
<dbReference type="GO" id="GO:0005506">
    <property type="term" value="F:iron ion binding"/>
    <property type="evidence" value="ECO:0007669"/>
    <property type="project" value="InterPro"/>
</dbReference>
<dbReference type="GO" id="GO:0019288">
    <property type="term" value="P:isopentenyl diphosphate biosynthetic process, methylerythritol 4-phosphate pathway"/>
    <property type="evidence" value="ECO:0007669"/>
    <property type="project" value="UniProtKB-UniRule"/>
</dbReference>
<dbReference type="GO" id="GO:0016114">
    <property type="term" value="P:terpenoid biosynthetic process"/>
    <property type="evidence" value="ECO:0007669"/>
    <property type="project" value="InterPro"/>
</dbReference>
<dbReference type="FunFam" id="3.20.20.20:FF:000001">
    <property type="entry name" value="4-hydroxy-3-methylbut-2-en-1-yl diphosphate synthase (flavodoxin)"/>
    <property type="match status" value="1"/>
</dbReference>
<dbReference type="FunFam" id="3.30.413.10:FF:000005">
    <property type="entry name" value="4-hydroxy-3-methylbut-2-en-1-yl diphosphate synthase (flavodoxin)"/>
    <property type="match status" value="1"/>
</dbReference>
<dbReference type="Gene3D" id="3.20.20.20">
    <property type="entry name" value="Dihydropteroate synthase-like"/>
    <property type="match status" value="1"/>
</dbReference>
<dbReference type="Gene3D" id="3.30.413.10">
    <property type="entry name" value="Sulfite Reductase Hemoprotein, domain 1"/>
    <property type="match status" value="1"/>
</dbReference>
<dbReference type="HAMAP" id="MF_00159">
    <property type="entry name" value="IspG"/>
    <property type="match status" value="1"/>
</dbReference>
<dbReference type="InterPro" id="IPR011005">
    <property type="entry name" value="Dihydropteroate_synth-like_sf"/>
</dbReference>
<dbReference type="InterPro" id="IPR016425">
    <property type="entry name" value="IspG_bac"/>
</dbReference>
<dbReference type="InterPro" id="IPR004588">
    <property type="entry name" value="IspG_bac-typ"/>
</dbReference>
<dbReference type="InterPro" id="IPR045854">
    <property type="entry name" value="NO2/SO3_Rdtase_4Fe4S_sf"/>
</dbReference>
<dbReference type="NCBIfam" id="TIGR00612">
    <property type="entry name" value="ispG_gcpE"/>
    <property type="match status" value="1"/>
</dbReference>
<dbReference type="NCBIfam" id="NF001540">
    <property type="entry name" value="PRK00366.1"/>
    <property type="match status" value="1"/>
</dbReference>
<dbReference type="PANTHER" id="PTHR30454">
    <property type="entry name" value="4-HYDROXY-3-METHYLBUT-2-EN-1-YL DIPHOSPHATE SYNTHASE"/>
    <property type="match status" value="1"/>
</dbReference>
<dbReference type="PANTHER" id="PTHR30454:SF0">
    <property type="entry name" value="4-HYDROXY-3-METHYLBUT-2-EN-1-YL DIPHOSPHATE SYNTHASE (FERREDOXIN), CHLOROPLASTIC"/>
    <property type="match status" value="1"/>
</dbReference>
<dbReference type="Pfam" id="PF04551">
    <property type="entry name" value="GcpE"/>
    <property type="match status" value="1"/>
</dbReference>
<dbReference type="PIRSF" id="PIRSF004640">
    <property type="entry name" value="IspG"/>
    <property type="match status" value="1"/>
</dbReference>
<dbReference type="SUPFAM" id="SSF51717">
    <property type="entry name" value="Dihydropteroate synthetase-like"/>
    <property type="match status" value="1"/>
</dbReference>
<dbReference type="SUPFAM" id="SSF56014">
    <property type="entry name" value="Nitrite and sulphite reductase 4Fe-4S domain-like"/>
    <property type="match status" value="1"/>
</dbReference>
<name>ISPG_CALS8</name>
<reference key="1">
    <citation type="submission" date="2007-04" db="EMBL/GenBank/DDBJ databases">
        <title>Genome sequence of the thermophilic hydrogen-producing bacterium Caldicellulosiruptor saccharolyticus DSM 8903.</title>
        <authorList>
            <person name="Copeland A."/>
            <person name="Lucas S."/>
            <person name="Lapidus A."/>
            <person name="Barry K."/>
            <person name="Detter J.C."/>
            <person name="Glavina del Rio T."/>
            <person name="Hammon N."/>
            <person name="Israni S."/>
            <person name="Dalin E."/>
            <person name="Tice H."/>
            <person name="Pitluck S."/>
            <person name="Kiss H."/>
            <person name="Brettin T."/>
            <person name="Bruce D."/>
            <person name="Han C."/>
            <person name="Schmutz J."/>
            <person name="Larimer F."/>
            <person name="Land M."/>
            <person name="Hauser L."/>
            <person name="Kyrpides N."/>
            <person name="Lykidis A."/>
            <person name="van de Werken H.J.G."/>
            <person name="Verhaart M.R.A."/>
            <person name="VanFossen A.L."/>
            <person name="Lewis D.L."/>
            <person name="Nichols J.D."/>
            <person name="Goorissen H.P."/>
            <person name="van Niel E.W.J."/>
            <person name="Stams F.J.M."/>
            <person name="Willquist K.U."/>
            <person name="Ward D.E."/>
            <person name="van der Oost J."/>
            <person name="Kelly R.M."/>
            <person name="Kengen S.M.W."/>
            <person name="Richardson P."/>
        </authorList>
    </citation>
    <scope>NUCLEOTIDE SEQUENCE [LARGE SCALE GENOMIC DNA]</scope>
    <source>
        <strain>ATCC 43494 / DSM 8903 / Tp8T 6331</strain>
    </source>
</reference>
<accession>A4XLZ4</accession>
<feature type="chain" id="PRO_1000058193" description="4-hydroxy-3-methylbut-2-en-1-yl diphosphate synthase (flavodoxin)">
    <location>
        <begin position="1"/>
        <end position="347"/>
    </location>
</feature>
<feature type="binding site" evidence="1">
    <location>
        <position position="259"/>
    </location>
    <ligand>
        <name>[4Fe-4S] cluster</name>
        <dbReference type="ChEBI" id="CHEBI:49883"/>
    </ligand>
</feature>
<feature type="binding site" evidence="1">
    <location>
        <position position="262"/>
    </location>
    <ligand>
        <name>[4Fe-4S] cluster</name>
        <dbReference type="ChEBI" id="CHEBI:49883"/>
    </ligand>
</feature>
<feature type="binding site" evidence="1">
    <location>
        <position position="294"/>
    </location>
    <ligand>
        <name>[4Fe-4S] cluster</name>
        <dbReference type="ChEBI" id="CHEBI:49883"/>
    </ligand>
</feature>
<feature type="binding site" evidence="1">
    <location>
        <position position="301"/>
    </location>
    <ligand>
        <name>[4Fe-4S] cluster</name>
        <dbReference type="ChEBI" id="CHEBI:49883"/>
    </ligand>
</feature>
<sequence length="347" mass="37817">MTKKIKIGNLYIGGGEPIRIQSMTNTKTKDIEKTVEQILRLESLGCEIIRVAVPDMESAKAIEKIKAKIHIPIVADIHFDYKLALEAIYNGADKIRINPGNIGGPEKVKKIVDEAKRYGIPIRVGANSGSLPKEILEKYKSPTPEAIVEAALNQVRLLESFDFDNIVISVKSSDILTTIKSYEILSRRTSYPLHVGLTEAGTFIAGCVKSSIAIGHLLLQGIGDTIRVSLTDDPEKEVTVAKEILKGLKLKKGVNIISCPTCARCNVDLIKIANEVEKRIGNLDLDISVAIMGCAVNGPGEAKEADIGIACGIGEGLLFKKGKIVKKVKEDDLVDELIREIYSLYKT</sequence>
<proteinExistence type="inferred from homology"/>
<organism>
    <name type="scientific">Caldicellulosiruptor saccharolyticus (strain ATCC 43494 / DSM 8903 / Tp8T 6331)</name>
    <dbReference type="NCBI Taxonomy" id="351627"/>
    <lineage>
        <taxon>Bacteria</taxon>
        <taxon>Bacillati</taxon>
        <taxon>Bacillota</taxon>
        <taxon>Bacillota incertae sedis</taxon>
        <taxon>Caldicellulosiruptorales</taxon>
        <taxon>Caldicellulosiruptoraceae</taxon>
        <taxon>Caldicellulosiruptor</taxon>
    </lineage>
</organism>
<evidence type="ECO:0000255" key="1">
    <source>
        <dbReference type="HAMAP-Rule" id="MF_00159"/>
    </source>
</evidence>
<comment type="function">
    <text evidence="1">Converts 2C-methyl-D-erythritol 2,4-cyclodiphosphate (ME-2,4cPP) into 1-hydroxy-2-methyl-2-(E)-butenyl 4-diphosphate.</text>
</comment>
<comment type="catalytic activity">
    <reaction evidence="1">
        <text>(2E)-4-hydroxy-3-methylbut-2-enyl diphosphate + oxidized [flavodoxin] + H2O + 2 H(+) = 2-C-methyl-D-erythritol 2,4-cyclic diphosphate + reduced [flavodoxin]</text>
        <dbReference type="Rhea" id="RHEA:43604"/>
        <dbReference type="Rhea" id="RHEA-COMP:10622"/>
        <dbReference type="Rhea" id="RHEA-COMP:10623"/>
        <dbReference type="ChEBI" id="CHEBI:15377"/>
        <dbReference type="ChEBI" id="CHEBI:15378"/>
        <dbReference type="ChEBI" id="CHEBI:57618"/>
        <dbReference type="ChEBI" id="CHEBI:58210"/>
        <dbReference type="ChEBI" id="CHEBI:58483"/>
        <dbReference type="ChEBI" id="CHEBI:128753"/>
        <dbReference type="EC" id="1.17.7.3"/>
    </reaction>
</comment>
<comment type="cofactor">
    <cofactor evidence="1">
        <name>[4Fe-4S] cluster</name>
        <dbReference type="ChEBI" id="CHEBI:49883"/>
    </cofactor>
    <text evidence="1">Binds 1 [4Fe-4S] cluster.</text>
</comment>
<comment type="pathway">
    <text evidence="1">Isoprenoid biosynthesis; isopentenyl diphosphate biosynthesis via DXP pathway; isopentenyl diphosphate from 1-deoxy-D-xylulose 5-phosphate: step 5/6.</text>
</comment>
<comment type="similarity">
    <text evidence="1">Belongs to the IspG family.</text>
</comment>
<protein>
    <recommendedName>
        <fullName evidence="1">4-hydroxy-3-methylbut-2-en-1-yl diphosphate synthase (flavodoxin)</fullName>
        <ecNumber evidence="1">1.17.7.3</ecNumber>
    </recommendedName>
    <alternativeName>
        <fullName evidence="1">1-hydroxy-2-methyl-2-(E)-butenyl 4-diphosphate synthase</fullName>
    </alternativeName>
</protein>
<gene>
    <name evidence="1" type="primary">ispG</name>
    <name type="ordered locus">Csac_2351</name>
</gene>
<keyword id="KW-0004">4Fe-4S</keyword>
<keyword id="KW-0408">Iron</keyword>
<keyword id="KW-0411">Iron-sulfur</keyword>
<keyword id="KW-0414">Isoprene biosynthesis</keyword>
<keyword id="KW-0479">Metal-binding</keyword>
<keyword id="KW-0560">Oxidoreductase</keyword>